<evidence type="ECO:0000255" key="1">
    <source>
        <dbReference type="HAMAP-Rule" id="MF_01310"/>
    </source>
</evidence>
<evidence type="ECO:0000305" key="2"/>
<reference key="1">
    <citation type="journal article" date="2009" name="PLoS Pathog.">
        <title>Genomic evidence for the evolution of Streptococcus equi: host restriction, increased virulence, and genetic exchange with human pathogens.</title>
        <authorList>
            <person name="Holden M.T.G."/>
            <person name="Heather Z."/>
            <person name="Paillot R."/>
            <person name="Steward K.F."/>
            <person name="Webb K."/>
            <person name="Ainslie F."/>
            <person name="Jourdan T."/>
            <person name="Bason N.C."/>
            <person name="Holroyd N.E."/>
            <person name="Mungall K."/>
            <person name="Quail M.A."/>
            <person name="Sanders M."/>
            <person name="Simmonds M."/>
            <person name="Willey D."/>
            <person name="Brooks K."/>
            <person name="Aanensen D.M."/>
            <person name="Spratt B.G."/>
            <person name="Jolley K.A."/>
            <person name="Maiden M.C.J."/>
            <person name="Kehoe M."/>
            <person name="Chanter N."/>
            <person name="Bentley S.D."/>
            <person name="Robinson C."/>
            <person name="Maskell D.J."/>
            <person name="Parkhill J."/>
            <person name="Waller A.S."/>
        </authorList>
    </citation>
    <scope>NUCLEOTIDE SEQUENCE [LARGE SCALE GENOMIC DNA]</scope>
    <source>
        <strain>4047</strain>
    </source>
</reference>
<dbReference type="EMBL" id="FM204883">
    <property type="protein sequence ID" value="CAW92013.1"/>
    <property type="molecule type" value="Genomic_DNA"/>
</dbReference>
<dbReference type="RefSeq" id="WP_001118387.1">
    <property type="nucleotide sequence ID" value="NC_012471.1"/>
</dbReference>
<dbReference type="SMR" id="C0M7C6"/>
<dbReference type="GeneID" id="93825319"/>
<dbReference type="KEGG" id="seu:SEQ_0080"/>
<dbReference type="HOGENOM" id="CLU_072439_5_0_9"/>
<dbReference type="OrthoDB" id="9806415at2"/>
<dbReference type="Proteomes" id="UP000001365">
    <property type="component" value="Chromosome"/>
</dbReference>
<dbReference type="GO" id="GO:1990904">
    <property type="term" value="C:ribonucleoprotein complex"/>
    <property type="evidence" value="ECO:0007669"/>
    <property type="project" value="UniProtKB-KW"/>
</dbReference>
<dbReference type="GO" id="GO:0005840">
    <property type="term" value="C:ribosome"/>
    <property type="evidence" value="ECO:0007669"/>
    <property type="project" value="UniProtKB-KW"/>
</dbReference>
<dbReference type="GO" id="GO:0019843">
    <property type="term" value="F:rRNA binding"/>
    <property type="evidence" value="ECO:0007669"/>
    <property type="project" value="UniProtKB-UniRule"/>
</dbReference>
<dbReference type="GO" id="GO:0003735">
    <property type="term" value="F:structural constituent of ribosome"/>
    <property type="evidence" value="ECO:0007669"/>
    <property type="project" value="InterPro"/>
</dbReference>
<dbReference type="GO" id="GO:0006412">
    <property type="term" value="P:translation"/>
    <property type="evidence" value="ECO:0007669"/>
    <property type="project" value="UniProtKB-UniRule"/>
</dbReference>
<dbReference type="FunFam" id="3.30.420.80:FF:000001">
    <property type="entry name" value="30S ribosomal protein S11"/>
    <property type="match status" value="1"/>
</dbReference>
<dbReference type="Gene3D" id="3.30.420.80">
    <property type="entry name" value="Ribosomal protein S11"/>
    <property type="match status" value="1"/>
</dbReference>
<dbReference type="HAMAP" id="MF_01310">
    <property type="entry name" value="Ribosomal_uS11"/>
    <property type="match status" value="1"/>
</dbReference>
<dbReference type="InterPro" id="IPR001971">
    <property type="entry name" value="Ribosomal_uS11"/>
</dbReference>
<dbReference type="InterPro" id="IPR019981">
    <property type="entry name" value="Ribosomal_uS11_bac-type"/>
</dbReference>
<dbReference type="InterPro" id="IPR018102">
    <property type="entry name" value="Ribosomal_uS11_CS"/>
</dbReference>
<dbReference type="InterPro" id="IPR036967">
    <property type="entry name" value="Ribosomal_uS11_sf"/>
</dbReference>
<dbReference type="NCBIfam" id="NF003698">
    <property type="entry name" value="PRK05309.1"/>
    <property type="match status" value="1"/>
</dbReference>
<dbReference type="NCBIfam" id="TIGR03632">
    <property type="entry name" value="uS11_bact"/>
    <property type="match status" value="1"/>
</dbReference>
<dbReference type="PANTHER" id="PTHR11759">
    <property type="entry name" value="40S RIBOSOMAL PROTEIN S14/30S RIBOSOMAL PROTEIN S11"/>
    <property type="match status" value="1"/>
</dbReference>
<dbReference type="Pfam" id="PF00411">
    <property type="entry name" value="Ribosomal_S11"/>
    <property type="match status" value="1"/>
</dbReference>
<dbReference type="PIRSF" id="PIRSF002131">
    <property type="entry name" value="Ribosomal_S11"/>
    <property type="match status" value="1"/>
</dbReference>
<dbReference type="SUPFAM" id="SSF53137">
    <property type="entry name" value="Translational machinery components"/>
    <property type="match status" value="1"/>
</dbReference>
<dbReference type="PROSITE" id="PS00054">
    <property type="entry name" value="RIBOSOMAL_S11"/>
    <property type="match status" value="1"/>
</dbReference>
<name>RS11_STRE4</name>
<organism>
    <name type="scientific">Streptococcus equi subsp. equi (strain 4047)</name>
    <dbReference type="NCBI Taxonomy" id="553482"/>
    <lineage>
        <taxon>Bacteria</taxon>
        <taxon>Bacillati</taxon>
        <taxon>Bacillota</taxon>
        <taxon>Bacilli</taxon>
        <taxon>Lactobacillales</taxon>
        <taxon>Streptococcaceae</taxon>
        <taxon>Streptococcus</taxon>
    </lineage>
</organism>
<accession>C0M7C6</accession>
<keyword id="KW-0687">Ribonucleoprotein</keyword>
<keyword id="KW-0689">Ribosomal protein</keyword>
<keyword id="KW-0694">RNA-binding</keyword>
<keyword id="KW-0699">rRNA-binding</keyword>
<comment type="function">
    <text evidence="1">Located on the platform of the 30S subunit, it bridges several disparate RNA helices of the 16S rRNA. Forms part of the Shine-Dalgarno cleft in the 70S ribosome.</text>
</comment>
<comment type="subunit">
    <text evidence="1">Part of the 30S ribosomal subunit. Interacts with proteins S7 and S18. Binds to IF-3.</text>
</comment>
<comment type="similarity">
    <text evidence="1">Belongs to the universal ribosomal protein uS11 family.</text>
</comment>
<sequence>MAKPTRKRRVKKNIESGVAHIHATFNNTIVMITDVHGNALAWSSAGALGFKGSRKSTPFAAQMAAEAAAKSAQEHGLKTVEVTVKGPGSGRESAIRALAAAGLEVTAIRDVTPVPHNGARPPKRRRV</sequence>
<feature type="chain" id="PRO_1000165568" description="Small ribosomal subunit protein uS11">
    <location>
        <begin position="1"/>
        <end position="127"/>
    </location>
</feature>
<protein>
    <recommendedName>
        <fullName evidence="1">Small ribosomal subunit protein uS11</fullName>
    </recommendedName>
    <alternativeName>
        <fullName evidence="2">30S ribosomal protein S11</fullName>
    </alternativeName>
</protein>
<gene>
    <name evidence="1" type="primary">rpsK</name>
    <name type="ordered locus">SEQ_0080</name>
</gene>
<proteinExistence type="inferred from homology"/>